<reference key="1">
    <citation type="journal article" date="2004" name="Nature">
        <title>Genome sequence of the Brown Norway rat yields insights into mammalian evolution.</title>
        <authorList>
            <person name="Gibbs R.A."/>
            <person name="Weinstock G.M."/>
            <person name="Metzker M.L."/>
            <person name="Muzny D.M."/>
            <person name="Sodergren E.J."/>
            <person name="Scherer S."/>
            <person name="Scott G."/>
            <person name="Steffen D."/>
            <person name="Worley K.C."/>
            <person name="Burch P.E."/>
            <person name="Okwuonu G."/>
            <person name="Hines S."/>
            <person name="Lewis L."/>
            <person name="Deramo C."/>
            <person name="Delgado O."/>
            <person name="Dugan-Rocha S."/>
            <person name="Miner G."/>
            <person name="Morgan M."/>
            <person name="Hawes A."/>
            <person name="Gill R."/>
            <person name="Holt R.A."/>
            <person name="Adams M.D."/>
            <person name="Amanatides P.G."/>
            <person name="Baden-Tillson H."/>
            <person name="Barnstead M."/>
            <person name="Chin S."/>
            <person name="Evans C.A."/>
            <person name="Ferriera S."/>
            <person name="Fosler C."/>
            <person name="Glodek A."/>
            <person name="Gu Z."/>
            <person name="Jennings D."/>
            <person name="Kraft C.L."/>
            <person name="Nguyen T."/>
            <person name="Pfannkoch C.M."/>
            <person name="Sitter C."/>
            <person name="Sutton G.G."/>
            <person name="Venter J.C."/>
            <person name="Woodage T."/>
            <person name="Smith D."/>
            <person name="Lee H.-M."/>
            <person name="Gustafson E."/>
            <person name="Cahill P."/>
            <person name="Kana A."/>
            <person name="Doucette-Stamm L."/>
            <person name="Weinstock K."/>
            <person name="Fechtel K."/>
            <person name="Weiss R.B."/>
            <person name="Dunn D.M."/>
            <person name="Green E.D."/>
            <person name="Blakesley R.W."/>
            <person name="Bouffard G.G."/>
            <person name="De Jong P.J."/>
            <person name="Osoegawa K."/>
            <person name="Zhu B."/>
            <person name="Marra M."/>
            <person name="Schein J."/>
            <person name="Bosdet I."/>
            <person name="Fjell C."/>
            <person name="Jones S."/>
            <person name="Krzywinski M."/>
            <person name="Mathewson C."/>
            <person name="Siddiqui A."/>
            <person name="Wye N."/>
            <person name="McPherson J."/>
            <person name="Zhao S."/>
            <person name="Fraser C.M."/>
            <person name="Shetty J."/>
            <person name="Shatsman S."/>
            <person name="Geer K."/>
            <person name="Chen Y."/>
            <person name="Abramzon S."/>
            <person name="Nierman W.C."/>
            <person name="Havlak P.H."/>
            <person name="Chen R."/>
            <person name="Durbin K.J."/>
            <person name="Egan A."/>
            <person name="Ren Y."/>
            <person name="Song X.-Z."/>
            <person name="Li B."/>
            <person name="Liu Y."/>
            <person name="Qin X."/>
            <person name="Cawley S."/>
            <person name="Cooney A.J."/>
            <person name="D'Souza L.M."/>
            <person name="Martin K."/>
            <person name="Wu J.Q."/>
            <person name="Gonzalez-Garay M.L."/>
            <person name="Jackson A.R."/>
            <person name="Kalafus K.J."/>
            <person name="McLeod M.P."/>
            <person name="Milosavljevic A."/>
            <person name="Virk D."/>
            <person name="Volkov A."/>
            <person name="Wheeler D.A."/>
            <person name="Zhang Z."/>
            <person name="Bailey J.A."/>
            <person name="Eichler E.E."/>
            <person name="Tuzun E."/>
            <person name="Birney E."/>
            <person name="Mongin E."/>
            <person name="Ureta-Vidal A."/>
            <person name="Woodwark C."/>
            <person name="Zdobnov E."/>
            <person name="Bork P."/>
            <person name="Suyama M."/>
            <person name="Torrents D."/>
            <person name="Alexandersson M."/>
            <person name="Trask B.J."/>
            <person name="Young J.M."/>
            <person name="Huang H."/>
            <person name="Wang H."/>
            <person name="Xing H."/>
            <person name="Daniels S."/>
            <person name="Gietzen D."/>
            <person name="Schmidt J."/>
            <person name="Stevens K."/>
            <person name="Vitt U."/>
            <person name="Wingrove J."/>
            <person name="Camara F."/>
            <person name="Mar Alba M."/>
            <person name="Abril J.F."/>
            <person name="Guigo R."/>
            <person name="Smit A."/>
            <person name="Dubchak I."/>
            <person name="Rubin E.M."/>
            <person name="Couronne O."/>
            <person name="Poliakov A."/>
            <person name="Huebner N."/>
            <person name="Ganten D."/>
            <person name="Goesele C."/>
            <person name="Hummel O."/>
            <person name="Kreitler T."/>
            <person name="Lee Y.-A."/>
            <person name="Monti J."/>
            <person name="Schulz H."/>
            <person name="Zimdahl H."/>
            <person name="Himmelbauer H."/>
            <person name="Lehrach H."/>
            <person name="Jacob H.J."/>
            <person name="Bromberg S."/>
            <person name="Gullings-Handley J."/>
            <person name="Jensen-Seaman M.I."/>
            <person name="Kwitek A.E."/>
            <person name="Lazar J."/>
            <person name="Pasko D."/>
            <person name="Tonellato P.J."/>
            <person name="Twigger S."/>
            <person name="Ponting C.P."/>
            <person name="Duarte J.M."/>
            <person name="Rice S."/>
            <person name="Goodstadt L."/>
            <person name="Beatson S.A."/>
            <person name="Emes R.D."/>
            <person name="Winter E.E."/>
            <person name="Webber C."/>
            <person name="Brandt P."/>
            <person name="Nyakatura G."/>
            <person name="Adetobi M."/>
            <person name="Chiaromonte F."/>
            <person name="Elnitski L."/>
            <person name="Eswara P."/>
            <person name="Hardison R.C."/>
            <person name="Hou M."/>
            <person name="Kolbe D."/>
            <person name="Makova K."/>
            <person name="Miller W."/>
            <person name="Nekrutenko A."/>
            <person name="Riemer C."/>
            <person name="Schwartz S."/>
            <person name="Taylor J."/>
            <person name="Yang S."/>
            <person name="Zhang Y."/>
            <person name="Lindpaintner K."/>
            <person name="Andrews T.D."/>
            <person name="Caccamo M."/>
            <person name="Clamp M."/>
            <person name="Clarke L."/>
            <person name="Curwen V."/>
            <person name="Durbin R.M."/>
            <person name="Eyras E."/>
            <person name="Searle S.M."/>
            <person name="Cooper G.M."/>
            <person name="Batzoglou S."/>
            <person name="Brudno M."/>
            <person name="Sidow A."/>
            <person name="Stone E.A."/>
            <person name="Payseur B.A."/>
            <person name="Bourque G."/>
            <person name="Lopez-Otin C."/>
            <person name="Puente X.S."/>
            <person name="Chakrabarti K."/>
            <person name="Chatterji S."/>
            <person name="Dewey C."/>
            <person name="Pachter L."/>
            <person name="Bray N."/>
            <person name="Yap V.B."/>
            <person name="Caspi A."/>
            <person name="Tesler G."/>
            <person name="Pevzner P.A."/>
            <person name="Haussler D."/>
            <person name="Roskin K.M."/>
            <person name="Baertsch R."/>
            <person name="Clawson H."/>
            <person name="Furey T.S."/>
            <person name="Hinrichs A.S."/>
            <person name="Karolchik D."/>
            <person name="Kent W.J."/>
            <person name="Rosenbloom K.R."/>
            <person name="Trumbower H."/>
            <person name="Weirauch M."/>
            <person name="Cooper D.N."/>
            <person name="Stenson P.D."/>
            <person name="Ma B."/>
            <person name="Brent M."/>
            <person name="Arumugam M."/>
            <person name="Shteynberg D."/>
            <person name="Copley R.R."/>
            <person name="Taylor M.S."/>
            <person name="Riethman H."/>
            <person name="Mudunuri U."/>
            <person name="Peterson J."/>
            <person name="Guyer M."/>
            <person name="Felsenfeld A."/>
            <person name="Old S."/>
            <person name="Mockrin S."/>
            <person name="Collins F.S."/>
        </authorList>
    </citation>
    <scope>NUCLEOTIDE SEQUENCE [LARGE SCALE GENOMIC DNA]</scope>
    <source>
        <strain>Brown Norway</strain>
    </source>
</reference>
<reference key="2">
    <citation type="submission" date="2005-09" db="EMBL/GenBank/DDBJ databases">
        <authorList>
            <person name="Mural R.J."/>
            <person name="Adams M.D."/>
            <person name="Myers E.W."/>
            <person name="Smith H.O."/>
            <person name="Venter J.C."/>
        </authorList>
    </citation>
    <scope>NUCLEOTIDE SEQUENCE [LARGE SCALE GENOMIC DNA]</scope>
</reference>
<reference key="3">
    <citation type="journal article" date="2004" name="Genome Res.">
        <title>The status, quality, and expansion of the NIH full-length cDNA project: the Mammalian Gene Collection (MGC).</title>
        <authorList>
            <consortium name="The MGC Project Team"/>
        </authorList>
    </citation>
    <scope>NUCLEOTIDE SEQUENCE [LARGE SCALE MRNA]</scope>
    <source>
        <tissue>Kidney</tissue>
        <tissue>Prostate</tissue>
    </source>
</reference>
<reference key="4">
    <citation type="journal article" date="2013" name="J. Cell Sci.">
        <title>Alpha-arrestin 1 (ARRDC1) and beta-arrestins cooperate to mediate Notch degradation in mammals.</title>
        <authorList>
            <person name="Puca L."/>
            <person name="Chastagner P."/>
            <person name="Meas-Yedid V."/>
            <person name="Israel A."/>
            <person name="Brou C."/>
        </authorList>
    </citation>
    <scope>INTERACTION WITH ARRB1 AND ARRB2</scope>
</reference>
<accession>B0BNL6</accession>
<accession>Q68FT0</accession>
<keyword id="KW-1003">Cell membrane</keyword>
<keyword id="KW-0472">Membrane</keyword>
<keyword id="KW-1185">Reference proteome</keyword>
<keyword id="KW-0832">Ubl conjugation</keyword>
<gene>
    <name evidence="6" type="primary">Arrdc1</name>
</gene>
<organism>
    <name type="scientific">Rattus norvegicus</name>
    <name type="common">Rat</name>
    <dbReference type="NCBI Taxonomy" id="10116"/>
    <lineage>
        <taxon>Eukaryota</taxon>
        <taxon>Metazoa</taxon>
        <taxon>Chordata</taxon>
        <taxon>Craniata</taxon>
        <taxon>Vertebrata</taxon>
        <taxon>Euteleostomi</taxon>
        <taxon>Mammalia</taxon>
        <taxon>Eutheria</taxon>
        <taxon>Euarchontoglires</taxon>
        <taxon>Glires</taxon>
        <taxon>Rodentia</taxon>
        <taxon>Myomorpha</taxon>
        <taxon>Muroidea</taxon>
        <taxon>Muridae</taxon>
        <taxon>Murinae</taxon>
        <taxon>Rattus</taxon>
    </lineage>
</organism>
<comment type="function">
    <text evidence="1">Functions as an adapter recruiting ubiquitin-protein ligases to their specific substrates. Through an ubiquitination-dependent mechanism plays for instance a role in the incorporation of SLC11A2 into extracellular vesicles. More generally, plays a role in the extracellular transport of proteins between cells through the release in the extracellular space of microvesicles. By participating in the ITCH-mediated ubiquitination and subsequent degradation of NOTCH1, negatively regulates the NOTCH signaling pathway.</text>
</comment>
<comment type="subunit">
    <text evidence="1 3">Interacts (via PPxY motifs) with ITCH (via WW domains); the interaction is direct and participates in the recruitment of the ubiquitin-protein ligase ITCH to the NOTCH1 receptor (By similarity). Interacts with ARRB1 and ARRB2; the interaction is direct (PubMed:23886940). Interacts with TSG101; may recruit TSG101 to the plasma membrane. Interacts (via PPxY motifs) with WWP2 (via WW domains); ubiquitinates ARRDC1. Interacts with SLC11A2; controls the incorporation of SLC11A2 into extracellular vesicles through an ubiquitination-dependent mechanism. Interacts with WWP1 (via WW domains). Interacts with NEDD4 (via WW domains). Interacts with PDCD6IP (By similarity).</text>
</comment>
<comment type="subcellular location">
    <subcellularLocation>
        <location evidence="1">Cell membrane</location>
    </subcellularLocation>
    <text evidence="1">Also found in extracellular vesicles different from exosomes.</text>
</comment>
<comment type="domain">
    <text evidence="1">The PPxY motifs mediate interaction with WW domain-containing ubiquitin-protein ligases.</text>
</comment>
<comment type="PTM">
    <text evidence="1">Ubiquitinated. Ubiquitination by WWP2; promotes localization to extracellular microvesicles. Ubiquitinated by WWP1.</text>
</comment>
<comment type="similarity">
    <text evidence="5">Belongs to the arrestin family.</text>
</comment>
<comment type="sequence caution" evidence="5">
    <conflict type="erroneous initiation">
        <sequence resource="EMBL-CDS" id="AAH79372"/>
    </conflict>
    <text>Extended N-terminus.</text>
</comment>
<evidence type="ECO:0000250" key="1">
    <source>
        <dbReference type="UniProtKB" id="Q8N5I2"/>
    </source>
</evidence>
<evidence type="ECO:0000256" key="2">
    <source>
        <dbReference type="SAM" id="MobiDB-lite"/>
    </source>
</evidence>
<evidence type="ECO:0000269" key="3">
    <source>
    </source>
</evidence>
<evidence type="ECO:0000303" key="4">
    <source>
    </source>
</evidence>
<evidence type="ECO:0000305" key="5"/>
<evidence type="ECO:0000312" key="6">
    <source>
        <dbReference type="RGD" id="1309961"/>
    </source>
</evidence>
<feature type="chain" id="PRO_0000442290" description="Arrestin domain-containing protein 1">
    <location>
        <begin position="1"/>
        <end position="434"/>
    </location>
</feature>
<feature type="region of interest" description="Disordered" evidence="2">
    <location>
        <begin position="295"/>
        <end position="345"/>
    </location>
</feature>
<feature type="short sequence motif" description="PPxY motif 1" evidence="1">
    <location>
        <begin position="401"/>
        <end position="404"/>
    </location>
</feature>
<feature type="short sequence motif" description="PPxY motif 2" evidence="1">
    <location>
        <begin position="414"/>
        <end position="417"/>
    </location>
</feature>
<feature type="compositionally biased region" description="Polar residues" evidence="2">
    <location>
        <begin position="330"/>
        <end position="342"/>
    </location>
</feature>
<feature type="sequence conflict" description="In Ref. 3; AAH79372." evidence="5" ref="3">
    <original>R</original>
    <variation>S</variation>
    <location>
        <position position="234"/>
    </location>
</feature>
<name>ARRD1_RAT</name>
<sequence length="434" mass="46109">MGRVQLFEIRLSQGRVVYSPGEPLAGAVHLRLGAPLPFRAIRVTCMGSCGVSNKANDGAWVVEESYFNSSLSLADKGSLPPGEHNFPFQFLLPATAPTSFEGPFGKIVHQVRASIDTPRFSKDHKCSLVFYILSPLNLNSIPDIEQPNVASTTKKFSYKLVKTGSVVLTASTDLRGYVVGQVLRLQADIENQSGKDTSPVVASLLQKVSYKAKRWIYDVRTIAEVEGTGVKAWRHAQWQEQILVPALPQSALPGCSLIHIDYYLQVSMKAPEATVTLPLFVGNIAVNQTPLSPCPGPGSSPGLLSPVVPSAPPQEEAEAVASGPHFSDPVSLSTKSHSQQQPLSTTLGSVSVTTIEPCVQVGSPARHSLHPPLCISIGATVPYFAEGSGGPVPTTSALILPPEYSSWGYPYEAPPSYEQSCGAGGTDVGLIPGS</sequence>
<dbReference type="EMBL" id="AABR07051236">
    <property type="status" value="NOT_ANNOTATED_CDS"/>
    <property type="molecule type" value="Genomic_DNA"/>
</dbReference>
<dbReference type="EMBL" id="BC158871">
    <property type="protein sequence ID" value="AAI58872.1"/>
    <property type="molecule type" value="mRNA"/>
</dbReference>
<dbReference type="EMBL" id="BC079372">
    <property type="protein sequence ID" value="AAH79372.1"/>
    <property type="status" value="ALT_INIT"/>
    <property type="molecule type" value="mRNA"/>
</dbReference>
<dbReference type="EMBL" id="CH474001">
    <property type="protein sequence ID" value="EDL93653.1"/>
    <property type="molecule type" value="Genomic_DNA"/>
</dbReference>
<dbReference type="RefSeq" id="NP_001094240.1">
    <property type="nucleotide sequence ID" value="NM_001100770.1"/>
</dbReference>
<dbReference type="SMR" id="B0BNL6"/>
<dbReference type="FunCoup" id="B0BNL6">
    <property type="interactions" value="396"/>
</dbReference>
<dbReference type="STRING" id="10116.ENSRNOP00000010169"/>
<dbReference type="iPTMnet" id="B0BNL6"/>
<dbReference type="PhosphoSitePlus" id="B0BNL6"/>
<dbReference type="PaxDb" id="10116-ENSRNOP00000010169"/>
<dbReference type="Ensembl" id="ENSRNOT00000010169.6">
    <property type="protein sequence ID" value="ENSRNOP00000010169.4"/>
    <property type="gene ID" value="ENSRNOG00000007622.7"/>
</dbReference>
<dbReference type="GeneID" id="366001"/>
<dbReference type="KEGG" id="rno:366001"/>
<dbReference type="AGR" id="RGD:1309961"/>
<dbReference type="CTD" id="92714"/>
<dbReference type="RGD" id="1309961">
    <property type="gene designation" value="Arrdc1"/>
</dbReference>
<dbReference type="eggNOG" id="KOG3780">
    <property type="taxonomic scope" value="Eukaryota"/>
</dbReference>
<dbReference type="GeneTree" id="ENSGT00940000159652"/>
<dbReference type="HOGENOM" id="CLU_051966_0_0_1"/>
<dbReference type="InParanoid" id="B0BNL6"/>
<dbReference type="OMA" id="IPDIEHP"/>
<dbReference type="OrthoDB" id="7785529at2759"/>
<dbReference type="PhylomeDB" id="B0BNL6"/>
<dbReference type="TreeFam" id="TF313650"/>
<dbReference type="PRO" id="PR:B0BNL6"/>
<dbReference type="Proteomes" id="UP000002494">
    <property type="component" value="Chromosome 3"/>
</dbReference>
<dbReference type="Proteomes" id="UP000234681">
    <property type="component" value="Chromosome 3"/>
</dbReference>
<dbReference type="Bgee" id="ENSRNOG00000007622">
    <property type="expression patterns" value="Expressed in lung and 19 other cell types or tissues"/>
</dbReference>
<dbReference type="GO" id="GO:0005737">
    <property type="term" value="C:cytoplasm"/>
    <property type="evidence" value="ECO:0000318"/>
    <property type="project" value="GO_Central"/>
</dbReference>
<dbReference type="GO" id="GO:0031410">
    <property type="term" value="C:cytoplasmic vesicle"/>
    <property type="evidence" value="ECO:0000266"/>
    <property type="project" value="RGD"/>
</dbReference>
<dbReference type="GO" id="GO:1903561">
    <property type="term" value="C:extracellular vesicle"/>
    <property type="evidence" value="ECO:0000250"/>
    <property type="project" value="UniProtKB"/>
</dbReference>
<dbReference type="GO" id="GO:0005886">
    <property type="term" value="C:plasma membrane"/>
    <property type="evidence" value="ECO:0000250"/>
    <property type="project" value="UniProtKB"/>
</dbReference>
<dbReference type="GO" id="GO:1990763">
    <property type="term" value="F:arrestin family protein binding"/>
    <property type="evidence" value="ECO:0000266"/>
    <property type="project" value="RGD"/>
</dbReference>
<dbReference type="GO" id="GO:0042802">
    <property type="term" value="F:identical protein binding"/>
    <property type="evidence" value="ECO:0000266"/>
    <property type="project" value="RGD"/>
</dbReference>
<dbReference type="GO" id="GO:0031625">
    <property type="term" value="F:ubiquitin protein ligase binding"/>
    <property type="evidence" value="ECO:0000266"/>
    <property type="project" value="RGD"/>
</dbReference>
<dbReference type="GO" id="GO:1990756">
    <property type="term" value="F:ubiquitin-like ligase-substrate adaptor activity"/>
    <property type="evidence" value="ECO:0000250"/>
    <property type="project" value="UniProtKB"/>
</dbReference>
<dbReference type="GO" id="GO:0006858">
    <property type="term" value="P:extracellular transport"/>
    <property type="evidence" value="ECO:0000250"/>
    <property type="project" value="UniProtKB"/>
</dbReference>
<dbReference type="GO" id="GO:0140112">
    <property type="term" value="P:extracellular vesicle biogenesis"/>
    <property type="evidence" value="ECO:0000250"/>
    <property type="project" value="UniProtKB"/>
</dbReference>
<dbReference type="GO" id="GO:0045746">
    <property type="term" value="P:negative regulation of Notch signaling pathway"/>
    <property type="evidence" value="ECO:0000250"/>
    <property type="project" value="UniProtKB"/>
</dbReference>
<dbReference type="GO" id="GO:0015031">
    <property type="term" value="P:protein transport"/>
    <property type="evidence" value="ECO:0000250"/>
    <property type="project" value="UniProtKB"/>
</dbReference>
<dbReference type="GO" id="GO:0016567">
    <property type="term" value="P:protein ubiquitination"/>
    <property type="evidence" value="ECO:0000250"/>
    <property type="project" value="UniProtKB"/>
</dbReference>
<dbReference type="GO" id="GO:0006511">
    <property type="term" value="P:ubiquitin-dependent protein catabolic process"/>
    <property type="evidence" value="ECO:0000250"/>
    <property type="project" value="UniProtKB"/>
</dbReference>
<dbReference type="FunFam" id="2.60.40.640:FF:000032">
    <property type="entry name" value="Arrestin domain-containing protein 1"/>
    <property type="match status" value="1"/>
</dbReference>
<dbReference type="FunFam" id="2.60.40.640:FF:000013">
    <property type="entry name" value="Putative arrestin domain-containing protein 1"/>
    <property type="match status" value="1"/>
</dbReference>
<dbReference type="Gene3D" id="2.60.40.640">
    <property type="match status" value="2"/>
</dbReference>
<dbReference type="InterPro" id="IPR014752">
    <property type="entry name" value="Arrestin-like_C"/>
</dbReference>
<dbReference type="InterPro" id="IPR011021">
    <property type="entry name" value="Arrestin-like_N"/>
</dbReference>
<dbReference type="InterPro" id="IPR011022">
    <property type="entry name" value="Arrestin_C-like"/>
</dbReference>
<dbReference type="InterPro" id="IPR050357">
    <property type="entry name" value="Arrestin_domain-protein"/>
</dbReference>
<dbReference type="InterPro" id="IPR014756">
    <property type="entry name" value="Ig_E-set"/>
</dbReference>
<dbReference type="PANTHER" id="PTHR11188">
    <property type="entry name" value="ARRESTIN DOMAIN CONTAINING PROTEIN"/>
    <property type="match status" value="1"/>
</dbReference>
<dbReference type="PANTHER" id="PTHR11188:SF176">
    <property type="entry name" value="ARRESTIN DOMAIN-CONTAINING PROTEIN 1"/>
    <property type="match status" value="1"/>
</dbReference>
<dbReference type="Pfam" id="PF02752">
    <property type="entry name" value="Arrestin_C"/>
    <property type="match status" value="1"/>
</dbReference>
<dbReference type="Pfam" id="PF00339">
    <property type="entry name" value="Arrestin_N"/>
    <property type="match status" value="1"/>
</dbReference>
<dbReference type="SMART" id="SM01017">
    <property type="entry name" value="Arrestin_C"/>
    <property type="match status" value="1"/>
</dbReference>
<dbReference type="SUPFAM" id="SSF81296">
    <property type="entry name" value="E set domains"/>
    <property type="match status" value="2"/>
</dbReference>
<protein>
    <recommendedName>
        <fullName evidence="5">Arrestin domain-containing protein 1</fullName>
    </recommendedName>
    <alternativeName>
        <fullName evidence="4">Alpha-arrestin 1</fullName>
    </alternativeName>
</protein>
<proteinExistence type="evidence at protein level"/>